<reference key="1">
    <citation type="journal article" date="2007" name="J. Bacteriol.">
        <title>Whole-genome analysis of the methyl tert-butyl ether-degrading beta-proteobacterium Methylibium petroleiphilum PM1.</title>
        <authorList>
            <person name="Kane S.R."/>
            <person name="Chakicherla A.Y."/>
            <person name="Chain P.S.G."/>
            <person name="Schmidt R."/>
            <person name="Shin M.W."/>
            <person name="Legler T.C."/>
            <person name="Scow K.M."/>
            <person name="Larimer F.W."/>
            <person name="Lucas S.M."/>
            <person name="Richardson P.M."/>
            <person name="Hristova K.R."/>
        </authorList>
    </citation>
    <scope>NUCLEOTIDE SEQUENCE [LARGE SCALE GENOMIC DNA]</scope>
    <source>
        <strain>ATCC BAA-1232 / LMG 22953 / PM1</strain>
    </source>
</reference>
<evidence type="ECO:0000255" key="1">
    <source>
        <dbReference type="HAMAP-Rule" id="MF_01008"/>
    </source>
</evidence>
<evidence type="ECO:0000255" key="2">
    <source>
        <dbReference type="PROSITE-ProRule" id="PRU01076"/>
    </source>
</evidence>
<feature type="chain" id="PRO_0000318887" description="Transcriptional regulator MraZ">
    <location>
        <begin position="1"/>
        <end position="146"/>
    </location>
</feature>
<feature type="domain" description="SpoVT-AbrB 1" evidence="2">
    <location>
        <begin position="9"/>
        <end position="55"/>
    </location>
</feature>
<feature type="domain" description="SpoVT-AbrB 2" evidence="2">
    <location>
        <begin position="81"/>
        <end position="124"/>
    </location>
</feature>
<comment type="subunit">
    <text evidence="1">Forms oligomers.</text>
</comment>
<comment type="subcellular location">
    <subcellularLocation>
        <location evidence="1">Cytoplasm</location>
        <location evidence="1">Nucleoid</location>
    </subcellularLocation>
</comment>
<comment type="similarity">
    <text evidence="1">Belongs to the MraZ family.</text>
</comment>
<sequence length="146" mass="16006">MAEIVFQGASALALDAKGRLAVPARHRDVLGALAQGRLTLTKHPVGCLLVFPRPAWEGFRDKVAALPLRAEGWKRIFLGNAMDVEIDASSRVLVSPELRQAAGLVKDVMLLGMGSHFELWDVQRYQAHEAEVMQQGLPESLGDFSF</sequence>
<accession>A2SCX6</accession>
<proteinExistence type="inferred from homology"/>
<dbReference type="EMBL" id="CP000555">
    <property type="protein sequence ID" value="ABM93415.1"/>
    <property type="molecule type" value="Genomic_DNA"/>
</dbReference>
<dbReference type="SMR" id="A2SCX6"/>
<dbReference type="STRING" id="420662.Mpe_A0453"/>
<dbReference type="KEGG" id="mpt:Mpe_A0453"/>
<dbReference type="eggNOG" id="COG2001">
    <property type="taxonomic scope" value="Bacteria"/>
</dbReference>
<dbReference type="HOGENOM" id="CLU_107907_2_1_4"/>
<dbReference type="Proteomes" id="UP000000366">
    <property type="component" value="Chromosome"/>
</dbReference>
<dbReference type="GO" id="GO:0005737">
    <property type="term" value="C:cytoplasm"/>
    <property type="evidence" value="ECO:0007669"/>
    <property type="project" value="UniProtKB-UniRule"/>
</dbReference>
<dbReference type="GO" id="GO:0009295">
    <property type="term" value="C:nucleoid"/>
    <property type="evidence" value="ECO:0007669"/>
    <property type="project" value="UniProtKB-SubCell"/>
</dbReference>
<dbReference type="GO" id="GO:0003700">
    <property type="term" value="F:DNA-binding transcription factor activity"/>
    <property type="evidence" value="ECO:0007669"/>
    <property type="project" value="UniProtKB-UniRule"/>
</dbReference>
<dbReference type="GO" id="GO:0000976">
    <property type="term" value="F:transcription cis-regulatory region binding"/>
    <property type="evidence" value="ECO:0007669"/>
    <property type="project" value="TreeGrafter"/>
</dbReference>
<dbReference type="GO" id="GO:2000143">
    <property type="term" value="P:negative regulation of DNA-templated transcription initiation"/>
    <property type="evidence" value="ECO:0007669"/>
    <property type="project" value="TreeGrafter"/>
</dbReference>
<dbReference type="CDD" id="cd16321">
    <property type="entry name" value="MraZ_C"/>
    <property type="match status" value="1"/>
</dbReference>
<dbReference type="CDD" id="cd16320">
    <property type="entry name" value="MraZ_N"/>
    <property type="match status" value="1"/>
</dbReference>
<dbReference type="Gene3D" id="3.40.1550.20">
    <property type="entry name" value="Transcriptional regulator MraZ domain"/>
    <property type="match status" value="1"/>
</dbReference>
<dbReference type="HAMAP" id="MF_01008">
    <property type="entry name" value="MraZ"/>
    <property type="match status" value="1"/>
</dbReference>
<dbReference type="InterPro" id="IPR003444">
    <property type="entry name" value="MraZ"/>
</dbReference>
<dbReference type="InterPro" id="IPR035644">
    <property type="entry name" value="MraZ_C"/>
</dbReference>
<dbReference type="InterPro" id="IPR020603">
    <property type="entry name" value="MraZ_dom"/>
</dbReference>
<dbReference type="InterPro" id="IPR035642">
    <property type="entry name" value="MraZ_N"/>
</dbReference>
<dbReference type="InterPro" id="IPR038619">
    <property type="entry name" value="MraZ_sf"/>
</dbReference>
<dbReference type="InterPro" id="IPR007159">
    <property type="entry name" value="SpoVT-AbrB_dom"/>
</dbReference>
<dbReference type="InterPro" id="IPR037914">
    <property type="entry name" value="SpoVT-AbrB_sf"/>
</dbReference>
<dbReference type="PANTHER" id="PTHR34701">
    <property type="entry name" value="TRANSCRIPTIONAL REGULATOR MRAZ"/>
    <property type="match status" value="1"/>
</dbReference>
<dbReference type="PANTHER" id="PTHR34701:SF1">
    <property type="entry name" value="TRANSCRIPTIONAL REGULATOR MRAZ"/>
    <property type="match status" value="1"/>
</dbReference>
<dbReference type="Pfam" id="PF02381">
    <property type="entry name" value="MraZ"/>
    <property type="match status" value="2"/>
</dbReference>
<dbReference type="SUPFAM" id="SSF89447">
    <property type="entry name" value="AbrB/MazE/MraZ-like"/>
    <property type="match status" value="1"/>
</dbReference>
<dbReference type="PROSITE" id="PS51740">
    <property type="entry name" value="SPOVT_ABRB"/>
    <property type="match status" value="2"/>
</dbReference>
<organism>
    <name type="scientific">Methylibium petroleiphilum (strain ATCC BAA-1232 / LMG 22953 / PM1)</name>
    <dbReference type="NCBI Taxonomy" id="420662"/>
    <lineage>
        <taxon>Bacteria</taxon>
        <taxon>Pseudomonadati</taxon>
        <taxon>Pseudomonadota</taxon>
        <taxon>Betaproteobacteria</taxon>
        <taxon>Burkholderiales</taxon>
        <taxon>Sphaerotilaceae</taxon>
        <taxon>Methylibium</taxon>
    </lineage>
</organism>
<gene>
    <name evidence="1" type="primary">mraZ</name>
    <name type="ordered locus">Mpe_A0453</name>
</gene>
<name>MRAZ_METPP</name>
<keyword id="KW-0963">Cytoplasm</keyword>
<keyword id="KW-0238">DNA-binding</keyword>
<keyword id="KW-1185">Reference proteome</keyword>
<keyword id="KW-0677">Repeat</keyword>
<keyword id="KW-0804">Transcription</keyword>
<keyword id="KW-0805">Transcription regulation</keyword>
<protein>
    <recommendedName>
        <fullName>Transcriptional regulator MraZ</fullName>
    </recommendedName>
</protein>